<feature type="chain" id="PRO_1000118931" description="Ribonuclease 3">
    <location>
        <begin position="1"/>
        <end position="226"/>
    </location>
</feature>
<feature type="domain" description="RNase III" evidence="1">
    <location>
        <begin position="7"/>
        <end position="129"/>
    </location>
</feature>
<feature type="domain" description="DRBM" evidence="1">
    <location>
        <begin position="156"/>
        <end position="226"/>
    </location>
</feature>
<feature type="active site" evidence="1">
    <location>
        <position position="46"/>
    </location>
</feature>
<feature type="active site" evidence="1">
    <location>
        <position position="118"/>
    </location>
</feature>
<feature type="binding site" evidence="1">
    <location>
        <position position="42"/>
    </location>
    <ligand>
        <name>Mg(2+)</name>
        <dbReference type="ChEBI" id="CHEBI:18420"/>
    </ligand>
</feature>
<feature type="binding site" evidence="1">
    <location>
        <position position="115"/>
    </location>
    <ligand>
        <name>Mg(2+)</name>
        <dbReference type="ChEBI" id="CHEBI:18420"/>
    </ligand>
</feature>
<feature type="binding site" evidence="1">
    <location>
        <position position="118"/>
    </location>
    <ligand>
        <name>Mg(2+)</name>
        <dbReference type="ChEBI" id="CHEBI:18420"/>
    </ligand>
</feature>
<proteinExistence type="inferred from homology"/>
<reference key="1">
    <citation type="submission" date="2008-12" db="EMBL/GenBank/DDBJ databases">
        <title>Complete sequence of chromosome of Shewanella baltica OS223.</title>
        <authorList>
            <consortium name="US DOE Joint Genome Institute"/>
            <person name="Lucas S."/>
            <person name="Copeland A."/>
            <person name="Lapidus A."/>
            <person name="Glavina del Rio T."/>
            <person name="Dalin E."/>
            <person name="Tice H."/>
            <person name="Bruce D."/>
            <person name="Goodwin L."/>
            <person name="Pitluck S."/>
            <person name="Chertkov O."/>
            <person name="Meincke L."/>
            <person name="Brettin T."/>
            <person name="Detter J.C."/>
            <person name="Han C."/>
            <person name="Kuske C.R."/>
            <person name="Larimer F."/>
            <person name="Land M."/>
            <person name="Hauser L."/>
            <person name="Kyrpides N."/>
            <person name="Ovchinnikova G."/>
            <person name="Brettar I."/>
            <person name="Rodrigues J."/>
            <person name="Konstantinidis K."/>
            <person name="Tiedje J."/>
        </authorList>
    </citation>
    <scope>NUCLEOTIDE SEQUENCE [LARGE SCALE GENOMIC DNA]</scope>
    <source>
        <strain>OS223</strain>
    </source>
</reference>
<evidence type="ECO:0000255" key="1">
    <source>
        <dbReference type="HAMAP-Rule" id="MF_00104"/>
    </source>
</evidence>
<organism>
    <name type="scientific">Shewanella baltica (strain OS223)</name>
    <dbReference type="NCBI Taxonomy" id="407976"/>
    <lineage>
        <taxon>Bacteria</taxon>
        <taxon>Pseudomonadati</taxon>
        <taxon>Pseudomonadota</taxon>
        <taxon>Gammaproteobacteria</taxon>
        <taxon>Alteromonadales</taxon>
        <taxon>Shewanellaceae</taxon>
        <taxon>Shewanella</taxon>
    </lineage>
</organism>
<keyword id="KW-0963">Cytoplasm</keyword>
<keyword id="KW-0255">Endonuclease</keyword>
<keyword id="KW-0378">Hydrolase</keyword>
<keyword id="KW-0460">Magnesium</keyword>
<keyword id="KW-0479">Metal-binding</keyword>
<keyword id="KW-0507">mRNA processing</keyword>
<keyword id="KW-0540">Nuclease</keyword>
<keyword id="KW-0694">RNA-binding</keyword>
<keyword id="KW-0698">rRNA processing</keyword>
<keyword id="KW-0699">rRNA-binding</keyword>
<keyword id="KW-0819">tRNA processing</keyword>
<accession>B8EBQ2</accession>
<comment type="function">
    <text evidence="1">Digests double-stranded RNA. Involved in the processing of primary rRNA transcript to yield the immediate precursors to the large and small rRNAs (23S and 16S). Processes some mRNAs, and tRNAs when they are encoded in the rRNA operon. Processes pre-crRNA and tracrRNA of type II CRISPR loci if present in the organism.</text>
</comment>
<comment type="catalytic activity">
    <reaction evidence="1">
        <text>Endonucleolytic cleavage to 5'-phosphomonoester.</text>
        <dbReference type="EC" id="3.1.26.3"/>
    </reaction>
</comment>
<comment type="cofactor">
    <cofactor evidence="1">
        <name>Mg(2+)</name>
        <dbReference type="ChEBI" id="CHEBI:18420"/>
    </cofactor>
</comment>
<comment type="subunit">
    <text evidence="1">Homodimer.</text>
</comment>
<comment type="subcellular location">
    <subcellularLocation>
        <location evidence="1">Cytoplasm</location>
    </subcellularLocation>
</comment>
<comment type="similarity">
    <text evidence="1">Belongs to the ribonuclease III family.</text>
</comment>
<sequence length="226" mass="25353">MEPIKNLPRLCRTLSYEFKNIELLTQALTHRSAANKHNERLEFLGDSILSIVISDALYHQFPKATEGDLSRMRATLVRGDTLTIIAQEFKLGDYLYLGPGELKSGGFRRESILADAVEAIIGAVYLDSDLEVCRALLLKWYAERLAEIQPGISQKDAKTLLQEHLQGFKKPLPDYQVINIEGDAHDQTFTVECRIEDLSQSVIGVASSRRKAEQIAAAQVLELLKK</sequence>
<gene>
    <name evidence="1" type="primary">rnc</name>
    <name type="ordered locus">Sbal223_3112</name>
</gene>
<name>RNC_SHEB2</name>
<dbReference type="EC" id="3.1.26.3" evidence="1"/>
<dbReference type="EMBL" id="CP001252">
    <property type="protein sequence ID" value="ACK47597.1"/>
    <property type="molecule type" value="Genomic_DNA"/>
</dbReference>
<dbReference type="RefSeq" id="WP_006080779.1">
    <property type="nucleotide sequence ID" value="NC_011663.1"/>
</dbReference>
<dbReference type="SMR" id="B8EBQ2"/>
<dbReference type="GeneID" id="11771546"/>
<dbReference type="KEGG" id="sbp:Sbal223_3112"/>
<dbReference type="HOGENOM" id="CLU_000907_1_1_6"/>
<dbReference type="Proteomes" id="UP000002507">
    <property type="component" value="Chromosome"/>
</dbReference>
<dbReference type="GO" id="GO:0005737">
    <property type="term" value="C:cytoplasm"/>
    <property type="evidence" value="ECO:0007669"/>
    <property type="project" value="UniProtKB-SubCell"/>
</dbReference>
<dbReference type="GO" id="GO:0003725">
    <property type="term" value="F:double-stranded RNA binding"/>
    <property type="evidence" value="ECO:0007669"/>
    <property type="project" value="TreeGrafter"/>
</dbReference>
<dbReference type="GO" id="GO:0046872">
    <property type="term" value="F:metal ion binding"/>
    <property type="evidence" value="ECO:0007669"/>
    <property type="project" value="UniProtKB-KW"/>
</dbReference>
<dbReference type="GO" id="GO:0004525">
    <property type="term" value="F:ribonuclease III activity"/>
    <property type="evidence" value="ECO:0007669"/>
    <property type="project" value="UniProtKB-UniRule"/>
</dbReference>
<dbReference type="GO" id="GO:0019843">
    <property type="term" value="F:rRNA binding"/>
    <property type="evidence" value="ECO:0007669"/>
    <property type="project" value="UniProtKB-KW"/>
</dbReference>
<dbReference type="GO" id="GO:0006397">
    <property type="term" value="P:mRNA processing"/>
    <property type="evidence" value="ECO:0007669"/>
    <property type="project" value="UniProtKB-UniRule"/>
</dbReference>
<dbReference type="GO" id="GO:0010468">
    <property type="term" value="P:regulation of gene expression"/>
    <property type="evidence" value="ECO:0007669"/>
    <property type="project" value="TreeGrafter"/>
</dbReference>
<dbReference type="GO" id="GO:0006364">
    <property type="term" value="P:rRNA processing"/>
    <property type="evidence" value="ECO:0007669"/>
    <property type="project" value="UniProtKB-UniRule"/>
</dbReference>
<dbReference type="GO" id="GO:0008033">
    <property type="term" value="P:tRNA processing"/>
    <property type="evidence" value="ECO:0007669"/>
    <property type="project" value="UniProtKB-KW"/>
</dbReference>
<dbReference type="CDD" id="cd10845">
    <property type="entry name" value="DSRM_RNAse_III_family"/>
    <property type="match status" value="1"/>
</dbReference>
<dbReference type="CDD" id="cd00593">
    <property type="entry name" value="RIBOc"/>
    <property type="match status" value="1"/>
</dbReference>
<dbReference type="FunFam" id="1.10.1520.10:FF:000001">
    <property type="entry name" value="Ribonuclease 3"/>
    <property type="match status" value="1"/>
</dbReference>
<dbReference type="FunFam" id="3.30.160.20:FF:000003">
    <property type="entry name" value="Ribonuclease 3"/>
    <property type="match status" value="1"/>
</dbReference>
<dbReference type="Gene3D" id="3.30.160.20">
    <property type="match status" value="1"/>
</dbReference>
<dbReference type="Gene3D" id="1.10.1520.10">
    <property type="entry name" value="Ribonuclease III domain"/>
    <property type="match status" value="1"/>
</dbReference>
<dbReference type="HAMAP" id="MF_00104">
    <property type="entry name" value="RNase_III"/>
    <property type="match status" value="1"/>
</dbReference>
<dbReference type="InterPro" id="IPR014720">
    <property type="entry name" value="dsRBD_dom"/>
</dbReference>
<dbReference type="InterPro" id="IPR011907">
    <property type="entry name" value="RNase_III"/>
</dbReference>
<dbReference type="InterPro" id="IPR000999">
    <property type="entry name" value="RNase_III_dom"/>
</dbReference>
<dbReference type="InterPro" id="IPR036389">
    <property type="entry name" value="RNase_III_sf"/>
</dbReference>
<dbReference type="NCBIfam" id="TIGR02191">
    <property type="entry name" value="RNaseIII"/>
    <property type="match status" value="1"/>
</dbReference>
<dbReference type="PANTHER" id="PTHR11207:SF0">
    <property type="entry name" value="RIBONUCLEASE 3"/>
    <property type="match status" value="1"/>
</dbReference>
<dbReference type="PANTHER" id="PTHR11207">
    <property type="entry name" value="RIBONUCLEASE III"/>
    <property type="match status" value="1"/>
</dbReference>
<dbReference type="Pfam" id="PF00035">
    <property type="entry name" value="dsrm"/>
    <property type="match status" value="1"/>
</dbReference>
<dbReference type="Pfam" id="PF14622">
    <property type="entry name" value="Ribonucleas_3_3"/>
    <property type="match status" value="1"/>
</dbReference>
<dbReference type="SMART" id="SM00358">
    <property type="entry name" value="DSRM"/>
    <property type="match status" value="1"/>
</dbReference>
<dbReference type="SMART" id="SM00535">
    <property type="entry name" value="RIBOc"/>
    <property type="match status" value="1"/>
</dbReference>
<dbReference type="SUPFAM" id="SSF54768">
    <property type="entry name" value="dsRNA-binding domain-like"/>
    <property type="match status" value="1"/>
</dbReference>
<dbReference type="SUPFAM" id="SSF69065">
    <property type="entry name" value="RNase III domain-like"/>
    <property type="match status" value="1"/>
</dbReference>
<dbReference type="PROSITE" id="PS50137">
    <property type="entry name" value="DS_RBD"/>
    <property type="match status" value="1"/>
</dbReference>
<dbReference type="PROSITE" id="PS00517">
    <property type="entry name" value="RNASE_3_1"/>
    <property type="match status" value="1"/>
</dbReference>
<dbReference type="PROSITE" id="PS50142">
    <property type="entry name" value="RNASE_3_2"/>
    <property type="match status" value="1"/>
</dbReference>
<protein>
    <recommendedName>
        <fullName evidence="1">Ribonuclease 3</fullName>
        <ecNumber evidence="1">3.1.26.3</ecNumber>
    </recommendedName>
    <alternativeName>
        <fullName evidence="1">Ribonuclease III</fullName>
        <shortName evidence="1">RNase III</shortName>
    </alternativeName>
</protein>